<accession>B8D5P9</accession>
<dbReference type="EMBL" id="CP001140">
    <property type="protein sequence ID" value="ACL11430.1"/>
    <property type="molecule type" value="Genomic_DNA"/>
</dbReference>
<dbReference type="RefSeq" id="WP_012608771.1">
    <property type="nucleotide sequence ID" value="NC_011766.1"/>
</dbReference>
<dbReference type="SMR" id="B8D5P9"/>
<dbReference type="STRING" id="490899.DKAM_1104"/>
<dbReference type="GeneID" id="7171634"/>
<dbReference type="KEGG" id="dka:DKAM_1104"/>
<dbReference type="eggNOG" id="arCOG04372">
    <property type="taxonomic scope" value="Archaea"/>
</dbReference>
<dbReference type="HOGENOM" id="CLU_074237_4_0_2"/>
<dbReference type="Proteomes" id="UP000006903">
    <property type="component" value="Chromosome"/>
</dbReference>
<dbReference type="GO" id="GO:0015934">
    <property type="term" value="C:large ribosomal subunit"/>
    <property type="evidence" value="ECO:0007669"/>
    <property type="project" value="TreeGrafter"/>
</dbReference>
<dbReference type="GO" id="GO:0070180">
    <property type="term" value="F:large ribosomal subunit rRNA binding"/>
    <property type="evidence" value="ECO:0007669"/>
    <property type="project" value="UniProtKB-UniRule"/>
</dbReference>
<dbReference type="GO" id="GO:0003735">
    <property type="term" value="F:structural constituent of ribosome"/>
    <property type="evidence" value="ECO:0007669"/>
    <property type="project" value="InterPro"/>
</dbReference>
<dbReference type="GO" id="GO:0006412">
    <property type="term" value="P:translation"/>
    <property type="evidence" value="ECO:0007669"/>
    <property type="project" value="UniProtKB-UniRule"/>
</dbReference>
<dbReference type="CDD" id="cd00349">
    <property type="entry name" value="Ribosomal_L11"/>
    <property type="match status" value="1"/>
</dbReference>
<dbReference type="FunFam" id="1.10.10.250:FF:000006">
    <property type="entry name" value="50S ribosomal protein L11"/>
    <property type="match status" value="1"/>
</dbReference>
<dbReference type="Gene3D" id="1.10.10.250">
    <property type="entry name" value="Ribosomal protein L11, C-terminal domain"/>
    <property type="match status" value="1"/>
</dbReference>
<dbReference type="Gene3D" id="3.30.1550.10">
    <property type="entry name" value="Ribosomal protein L11/L12, N-terminal domain"/>
    <property type="match status" value="1"/>
</dbReference>
<dbReference type="HAMAP" id="MF_00736">
    <property type="entry name" value="Ribosomal_uL11"/>
    <property type="match status" value="1"/>
</dbReference>
<dbReference type="InterPro" id="IPR000911">
    <property type="entry name" value="Ribosomal_uL11"/>
</dbReference>
<dbReference type="InterPro" id="IPR020783">
    <property type="entry name" value="Ribosomal_uL11_C"/>
</dbReference>
<dbReference type="InterPro" id="IPR036769">
    <property type="entry name" value="Ribosomal_uL11_C_sf"/>
</dbReference>
<dbReference type="InterPro" id="IPR020785">
    <property type="entry name" value="Ribosomal_uL11_CS"/>
</dbReference>
<dbReference type="InterPro" id="IPR020784">
    <property type="entry name" value="Ribosomal_uL11_N"/>
</dbReference>
<dbReference type="InterPro" id="IPR036796">
    <property type="entry name" value="Ribosomal_uL11_N_sf"/>
</dbReference>
<dbReference type="NCBIfam" id="NF002232">
    <property type="entry name" value="PRK01143.1"/>
    <property type="match status" value="1"/>
</dbReference>
<dbReference type="PANTHER" id="PTHR11661">
    <property type="entry name" value="60S RIBOSOMAL PROTEIN L12"/>
    <property type="match status" value="1"/>
</dbReference>
<dbReference type="PANTHER" id="PTHR11661:SF1">
    <property type="entry name" value="LARGE RIBOSOMAL SUBUNIT PROTEIN UL11M"/>
    <property type="match status" value="1"/>
</dbReference>
<dbReference type="Pfam" id="PF00298">
    <property type="entry name" value="Ribosomal_L11"/>
    <property type="match status" value="1"/>
</dbReference>
<dbReference type="Pfam" id="PF03946">
    <property type="entry name" value="Ribosomal_L11_N"/>
    <property type="match status" value="1"/>
</dbReference>
<dbReference type="SMART" id="SM00649">
    <property type="entry name" value="RL11"/>
    <property type="match status" value="1"/>
</dbReference>
<dbReference type="SUPFAM" id="SSF54747">
    <property type="entry name" value="Ribosomal L11/L12e N-terminal domain"/>
    <property type="match status" value="1"/>
</dbReference>
<dbReference type="SUPFAM" id="SSF46906">
    <property type="entry name" value="Ribosomal protein L11, C-terminal domain"/>
    <property type="match status" value="1"/>
</dbReference>
<dbReference type="PROSITE" id="PS00359">
    <property type="entry name" value="RIBOSOMAL_L11"/>
    <property type="match status" value="1"/>
</dbReference>
<organism>
    <name type="scientific">Desulfurococcus amylolyticus (strain DSM 18924 / JCM 16383 / VKM B-2413 / 1221n)</name>
    <name type="common">Desulfurococcus kamchatkensis</name>
    <dbReference type="NCBI Taxonomy" id="490899"/>
    <lineage>
        <taxon>Archaea</taxon>
        <taxon>Thermoproteota</taxon>
        <taxon>Thermoprotei</taxon>
        <taxon>Desulfurococcales</taxon>
        <taxon>Desulfurococcaceae</taxon>
        <taxon>Desulfurococcus</taxon>
    </lineage>
</organism>
<name>RL11_DESA1</name>
<keyword id="KW-0687">Ribonucleoprotein</keyword>
<keyword id="KW-0689">Ribosomal protein</keyword>
<keyword id="KW-0694">RNA-binding</keyword>
<keyword id="KW-0699">rRNA-binding</keyword>
<sequence>MVKKTIRVMVEGGKATPGPPLGPTLSPYKVNIPQVVKAINDATKDFEGLSVPVEITIDIDTKEFEVRVGIPTTTALLMKEAGAKQPTGDPAHQKIGNISFEQVVKVAILKRDSLTAKTLRAAVKTVLGTARSIGITVDGKDPKEVQKLVDEGVYDEILSRYEEEWSKGGQ</sequence>
<protein>
    <recommendedName>
        <fullName evidence="1">Large ribosomal subunit protein uL11</fullName>
    </recommendedName>
    <alternativeName>
        <fullName evidence="2">50S ribosomal protein L11</fullName>
    </alternativeName>
</protein>
<feature type="chain" id="PRO_1000195752" description="Large ribosomal subunit protein uL11">
    <location>
        <begin position="1"/>
        <end position="170"/>
    </location>
</feature>
<reference key="1">
    <citation type="journal article" date="2009" name="J. Bacteriol.">
        <title>Complete genome sequence of the anaerobic, protein-degrading hyperthermophilic crenarchaeon Desulfurococcus kamchatkensis.</title>
        <authorList>
            <person name="Ravin N.V."/>
            <person name="Mardanov A.V."/>
            <person name="Beletsky A.V."/>
            <person name="Kublanov I.V."/>
            <person name="Kolganova T.V."/>
            <person name="Lebedinsky A.V."/>
            <person name="Chernyh N.A."/>
            <person name="Bonch-Osmolovskaya E.A."/>
            <person name="Skryabin K.G."/>
        </authorList>
    </citation>
    <scope>NUCLEOTIDE SEQUENCE [LARGE SCALE GENOMIC DNA]</scope>
    <source>
        <strain>DSM 18924 / JCM 16383 / VKM B-2413 / 1221n</strain>
    </source>
</reference>
<comment type="function">
    <text evidence="1">Forms part of the ribosomal stalk which helps the ribosome interact with GTP-bound translation factors.</text>
</comment>
<comment type="subunit">
    <text evidence="1">Part of the ribosomal stalk of the 50S ribosomal subunit. Interacts with L10 and the large rRNA to form the base of the stalk. L10 forms an elongated spine to which L12 dimers bind in a sequential fashion forming a multimeric L10(L12)X complex.</text>
</comment>
<comment type="similarity">
    <text evidence="1">Belongs to the universal ribosomal protein uL11 family.</text>
</comment>
<proteinExistence type="inferred from homology"/>
<gene>
    <name evidence="1" type="primary">rpl11</name>
    <name type="ordered locus">DKAM_1104</name>
</gene>
<evidence type="ECO:0000255" key="1">
    <source>
        <dbReference type="HAMAP-Rule" id="MF_00736"/>
    </source>
</evidence>
<evidence type="ECO:0000305" key="2"/>